<evidence type="ECO:0000250" key="1"/>
<evidence type="ECO:0000255" key="2"/>
<evidence type="ECO:0000269" key="3">
    <source>
    </source>
</evidence>
<evidence type="ECO:0000305" key="4"/>
<accession>O54758</accession>
<name>ALMS_TAMSI</name>
<keyword id="KW-0325">Glycoprotein</keyword>
<keyword id="KW-0646">Protease inhibitor</keyword>
<keyword id="KW-0873">Pyrrolidone carboxylic acid</keyword>
<keyword id="KW-0964">Secreted</keyword>
<keyword id="KW-0722">Serine protease inhibitor</keyword>
<keyword id="KW-0732">Signal</keyword>
<protein>
    <recommendedName>
        <fullName>Alpha-1-antitrypsin-like protein CM55-MS</fullName>
    </recommendedName>
</protein>
<reference key="1">
    <citation type="journal article" date="1997" name="Gene">
        <title>Expression of multiple alpha1-antitrypsin-like genes in hibernating species of the squirrel family.</title>
        <authorList>
            <person name="Takamatsu N."/>
            <person name="Kojima M."/>
            <person name="Taniyama M."/>
            <person name="Ohba K."/>
            <person name="Uematsu T."/>
            <person name="Segawa C."/>
            <person name="Tsutou S."/>
            <person name="Watanabe M."/>
            <person name="Kondo J."/>
            <person name="Kondo N."/>
            <person name="Shiba T."/>
        </authorList>
    </citation>
    <scope>NUCLEOTIDE SEQUENCE [MRNA]</scope>
    <scope>TISSUE SPECIFICITY</scope>
    <source>
        <tissue>Liver</tissue>
    </source>
</reference>
<sequence length="413" mass="45952">MPSSISWGLLLLAALSCLGPGSLAQDAQETEASKQDQEHPASHRIAPHLAEFALSLYRVLARQSNTTNIFFSPVSIATALAMLSLGTKGDTHTQILEGLDFNLTEMAEADIHQGFQHLLQTLNRPNTQLQLTSGNGLFIHQNLKLLDKFLEDVKSLYHSEAFPTNFTNMEEARQQINSYVEKGTQGKIVELVKELDSDTVLALVNYIFFKGKWLKPFNEEHTREEDFHVDEATTVRVPMMNREGRFHLHHCSTLASWVLQMDYLGNATAIFLLPDEGKMQHLEDTVSTEILSKFLKNRQTTRVSLYFPKVSISGTYALKTVLSSLGITKVFSNAADLSGVTEEAPLIVSKALHKAVLDIDEEGTEAAGATVGGITFMSRPKEVIFDRPFLVVIYEHHTKSPLFVGKVVNPTQQ</sequence>
<comment type="function">
    <text evidence="1">Serine protease inhibitor.</text>
</comment>
<comment type="subcellular location">
    <subcellularLocation>
        <location evidence="1">Secreted</location>
    </subcellularLocation>
</comment>
<comment type="tissue specificity">
    <text evidence="3">Expressed in liver.</text>
</comment>
<comment type="domain">
    <text evidence="1">The reactive center loop (RCL) extends out from the body of the protein and directs binding to the target protease. The protease cleaves the serpin at the reactive site within the RCL, establishing a covalent linkage between the serpin reactive site and the active site of the protease. The resulting inactive serpin-protease complex is highly stable (By similarity).</text>
</comment>
<comment type="similarity">
    <text evidence="4">Belongs to the serpin family.</text>
</comment>
<organism>
    <name type="scientific">Tamias sibiricus</name>
    <name type="common">Siberian chipmunk</name>
    <name type="synonym">Eutamias sibiricus</name>
    <dbReference type="NCBI Taxonomy" id="64680"/>
    <lineage>
        <taxon>Eukaryota</taxon>
        <taxon>Metazoa</taxon>
        <taxon>Chordata</taxon>
        <taxon>Craniata</taxon>
        <taxon>Vertebrata</taxon>
        <taxon>Euteleostomi</taxon>
        <taxon>Mammalia</taxon>
        <taxon>Eutheria</taxon>
        <taxon>Euarchontoglires</taxon>
        <taxon>Glires</taxon>
        <taxon>Rodentia</taxon>
        <taxon>Sciuromorpha</taxon>
        <taxon>Sciuridae</taxon>
        <taxon>Xerinae</taxon>
        <taxon>Marmotini</taxon>
        <taxon>Tamias</taxon>
    </lineage>
</organism>
<feature type="signal peptide" evidence="2">
    <location>
        <begin position="1"/>
        <end position="24"/>
    </location>
</feature>
<feature type="chain" id="PRO_0000032404" description="Alpha-1-antitrypsin-like protein CM55-MS">
    <location>
        <begin position="25"/>
        <end position="413"/>
    </location>
</feature>
<feature type="region of interest" description="RCL">
    <location>
        <begin position="368"/>
        <end position="387"/>
    </location>
</feature>
<feature type="site" description="Reactive bond" evidence="1">
    <location>
        <begin position="377"/>
        <end position="378"/>
    </location>
</feature>
<feature type="modified residue" description="Pyrrolidone carboxylic acid" evidence="2">
    <location>
        <position position="25"/>
    </location>
</feature>
<feature type="glycosylation site" description="N-linked (GlcNAc...) asparagine" evidence="2">
    <location>
        <position position="65"/>
    </location>
</feature>
<feature type="glycosylation site" description="N-linked (GlcNAc...) asparagine" evidence="2">
    <location>
        <position position="102"/>
    </location>
</feature>
<feature type="glycosylation site" description="N-linked (GlcNAc...) asparagine" evidence="2">
    <location>
        <position position="165"/>
    </location>
</feature>
<feature type="glycosylation site" description="N-linked (GlcNAc...) asparagine" evidence="2">
    <location>
        <position position="266"/>
    </location>
</feature>
<proteinExistence type="evidence at transcript level"/>
<dbReference type="EMBL" id="AB000547">
    <property type="protein sequence ID" value="BAA24417.1"/>
    <property type="molecule type" value="mRNA"/>
</dbReference>
<dbReference type="SMR" id="O54758"/>
<dbReference type="MEROPS" id="I04.001"/>
<dbReference type="GO" id="GO:0005615">
    <property type="term" value="C:extracellular space"/>
    <property type="evidence" value="ECO:0007669"/>
    <property type="project" value="InterPro"/>
</dbReference>
<dbReference type="GO" id="GO:0004867">
    <property type="term" value="F:serine-type endopeptidase inhibitor activity"/>
    <property type="evidence" value="ECO:0007669"/>
    <property type="project" value="UniProtKB-KW"/>
</dbReference>
<dbReference type="CDD" id="cd02056">
    <property type="entry name" value="serpinA1_A1AT"/>
    <property type="match status" value="1"/>
</dbReference>
<dbReference type="FunFam" id="2.30.39.10:FF:000003">
    <property type="entry name" value="alpha-1-antitrypsin isoform X1"/>
    <property type="match status" value="1"/>
</dbReference>
<dbReference type="FunFam" id="3.30.497.10:FF:000001">
    <property type="entry name" value="Serine protease inhibitor"/>
    <property type="match status" value="1"/>
</dbReference>
<dbReference type="FunFam" id="2.10.310.10:FF:000001">
    <property type="entry name" value="Serpin family A member 1"/>
    <property type="match status" value="1"/>
</dbReference>
<dbReference type="Gene3D" id="2.30.39.10">
    <property type="entry name" value="Alpha-1-antitrypsin, domain 1"/>
    <property type="match status" value="1"/>
</dbReference>
<dbReference type="Gene3D" id="3.30.497.10">
    <property type="entry name" value="Antithrombin, subunit I, domain 2"/>
    <property type="match status" value="1"/>
</dbReference>
<dbReference type="Gene3D" id="2.10.310.10">
    <property type="entry name" value="Serpins superfamily"/>
    <property type="match status" value="1"/>
</dbReference>
<dbReference type="InterPro" id="IPR023795">
    <property type="entry name" value="Serpin_CS"/>
</dbReference>
<dbReference type="InterPro" id="IPR023796">
    <property type="entry name" value="Serpin_dom"/>
</dbReference>
<dbReference type="InterPro" id="IPR000215">
    <property type="entry name" value="Serpin_fam"/>
</dbReference>
<dbReference type="InterPro" id="IPR036186">
    <property type="entry name" value="Serpin_sf"/>
</dbReference>
<dbReference type="InterPro" id="IPR042178">
    <property type="entry name" value="Serpin_sf_1"/>
</dbReference>
<dbReference type="InterPro" id="IPR042185">
    <property type="entry name" value="Serpin_sf_2"/>
</dbReference>
<dbReference type="PANTHER" id="PTHR11461:SF165">
    <property type="entry name" value="ALPHA-1-ANTITRYPSIN"/>
    <property type="match status" value="1"/>
</dbReference>
<dbReference type="PANTHER" id="PTHR11461">
    <property type="entry name" value="SERINE PROTEASE INHIBITOR, SERPIN"/>
    <property type="match status" value="1"/>
</dbReference>
<dbReference type="Pfam" id="PF00079">
    <property type="entry name" value="Serpin"/>
    <property type="match status" value="1"/>
</dbReference>
<dbReference type="SMART" id="SM00093">
    <property type="entry name" value="SERPIN"/>
    <property type="match status" value="1"/>
</dbReference>
<dbReference type="SUPFAM" id="SSF56574">
    <property type="entry name" value="Serpins"/>
    <property type="match status" value="1"/>
</dbReference>
<dbReference type="PROSITE" id="PS00284">
    <property type="entry name" value="SERPIN"/>
    <property type="match status" value="1"/>
</dbReference>